<comment type="function">
    <text evidence="1">Required for gamma-tubulin complex recruitment to the microtubule organizing centers (MTOCs) (By similarity). During mitosis, modulates gamma-tubulin complex localization, spindle stability and chromosomal segregation. Necessary for gametophyte development and embryogenesis.</text>
</comment>
<comment type="subunit">
    <text evidence="3 4 5">Part of the gamma-tubulin complex. Interacts with GIP1 and GCP3.</text>
</comment>
<comment type="subcellular location">
    <subcellularLocation>
        <location evidence="2">Cytoplasm</location>
        <location evidence="2">Cytoskeleton</location>
        <location evidence="2">Microtubule organizing center</location>
    </subcellularLocation>
    <subcellularLocation>
        <location>Cytoplasm</location>
        <location>Cytoskeleton</location>
        <location>Spindle</location>
    </subcellularLocation>
    <subcellularLocation>
        <location>Nucleus</location>
    </subcellularLocation>
    <subcellularLocation>
        <location>Cytoplasm</location>
        <location>Cytoskeleton</location>
        <location>Phragmoplast</location>
    </subcellularLocation>
    <subcellularLocation>
        <location>Nucleus envelope</location>
    </subcellularLocation>
    <text>Reorganized from the nucleus to the prospindle and the preprophase band in late G2. After nuclear envelope breakdown, localized on spindle and phragmoplast microtubules (MTs) and on the reforming nuclear envelope of daughter cells. Present in mitotic microtubule arrays. In interphase cortical arrays, gamma-tubulin complexes are preferentially recruited to existing microtubules, from which new microtubules are efficiently nucleated.</text>
</comment>
<comment type="tissue specificity">
    <text evidence="3 4">Mostly expressed in siliques and flowers, and, to a lower extent, in leaves, roots and seedlings, with highest levels in young tissues, meristematic cells, and the vasculature.</text>
</comment>
<comment type="disruption phenotype">
    <text evidence="3 4">In the gip1 gip2 double mutants, embryonic lethality and impaired development of male gametophytes, severe growth defects and sterility, characterized by microtubule (MT) misorganization and abnormal spindle polarity, resulting in ploidy defects.</text>
</comment>
<comment type="similarity">
    <text evidence="6">Belongs to the MOZART1 family.</text>
</comment>
<keyword id="KW-0963">Cytoplasm</keyword>
<keyword id="KW-0206">Cytoskeleton</keyword>
<keyword id="KW-0493">Microtubule</keyword>
<keyword id="KW-0539">Nucleus</keyword>
<keyword id="KW-1185">Reference proteome</keyword>
<evidence type="ECO:0000250" key="1"/>
<evidence type="ECO:0000250" key="2">
    <source>
        <dbReference type="UniProtKB" id="Q08AG7"/>
    </source>
</evidence>
<evidence type="ECO:0000269" key="3">
    <source>
    </source>
</evidence>
<evidence type="ECO:0000269" key="4">
    <source>
    </source>
</evidence>
<evidence type="ECO:0000269" key="5">
    <source>
    </source>
</evidence>
<evidence type="ECO:0000305" key="6"/>
<protein>
    <recommendedName>
        <fullName>Mitotic-spindle organizing protein 1A</fullName>
    </recommendedName>
    <alternativeName>
        <fullName>GCP3-interacting protein 2</fullName>
        <shortName>AtGIP2</shortName>
    </alternativeName>
    <alternativeName>
        <fullName>Mitotic-spindle organizing protein associated with a ring of gamma-tubulin 1A</fullName>
        <shortName>AtGIP1A</shortName>
    </alternativeName>
</protein>
<sequence>MNQEAAETARESLELVFRMSNILETGLDRHTLSVLIALCDIGLNPEALATLVKELRRDSATTTTTVD</sequence>
<name>MZT1A_ARATH</name>
<proteinExistence type="evidence at protein level"/>
<reference key="1">
    <citation type="journal article" date="2000" name="Nature">
        <title>Sequence and analysis of chromosome 1 of the plant Arabidopsis thaliana.</title>
        <authorList>
            <person name="Theologis A."/>
            <person name="Ecker J.R."/>
            <person name="Palm C.J."/>
            <person name="Federspiel N.A."/>
            <person name="Kaul S."/>
            <person name="White O."/>
            <person name="Alonso J."/>
            <person name="Altafi H."/>
            <person name="Araujo R."/>
            <person name="Bowman C.L."/>
            <person name="Brooks S.Y."/>
            <person name="Buehler E."/>
            <person name="Chan A."/>
            <person name="Chao Q."/>
            <person name="Chen H."/>
            <person name="Cheuk R.F."/>
            <person name="Chin C.W."/>
            <person name="Chung M.K."/>
            <person name="Conn L."/>
            <person name="Conway A.B."/>
            <person name="Conway A.R."/>
            <person name="Creasy T.H."/>
            <person name="Dewar K."/>
            <person name="Dunn P."/>
            <person name="Etgu P."/>
            <person name="Feldblyum T.V."/>
            <person name="Feng J.-D."/>
            <person name="Fong B."/>
            <person name="Fujii C.Y."/>
            <person name="Gill J.E."/>
            <person name="Goldsmith A.D."/>
            <person name="Haas B."/>
            <person name="Hansen N.F."/>
            <person name="Hughes B."/>
            <person name="Huizar L."/>
            <person name="Hunter J.L."/>
            <person name="Jenkins J."/>
            <person name="Johnson-Hopson C."/>
            <person name="Khan S."/>
            <person name="Khaykin E."/>
            <person name="Kim C.J."/>
            <person name="Koo H.L."/>
            <person name="Kremenetskaia I."/>
            <person name="Kurtz D.B."/>
            <person name="Kwan A."/>
            <person name="Lam B."/>
            <person name="Langin-Hooper S."/>
            <person name="Lee A."/>
            <person name="Lee J.M."/>
            <person name="Lenz C.A."/>
            <person name="Li J.H."/>
            <person name="Li Y.-P."/>
            <person name="Lin X."/>
            <person name="Liu S.X."/>
            <person name="Liu Z.A."/>
            <person name="Luros J.S."/>
            <person name="Maiti R."/>
            <person name="Marziali A."/>
            <person name="Militscher J."/>
            <person name="Miranda M."/>
            <person name="Nguyen M."/>
            <person name="Nierman W.C."/>
            <person name="Osborne B.I."/>
            <person name="Pai G."/>
            <person name="Peterson J."/>
            <person name="Pham P.K."/>
            <person name="Rizzo M."/>
            <person name="Rooney T."/>
            <person name="Rowley D."/>
            <person name="Sakano H."/>
            <person name="Salzberg S.L."/>
            <person name="Schwartz J.R."/>
            <person name="Shinn P."/>
            <person name="Southwick A.M."/>
            <person name="Sun H."/>
            <person name="Tallon L.J."/>
            <person name="Tambunga G."/>
            <person name="Toriumi M.J."/>
            <person name="Town C.D."/>
            <person name="Utterback T."/>
            <person name="Van Aken S."/>
            <person name="Vaysberg M."/>
            <person name="Vysotskaia V.S."/>
            <person name="Walker M."/>
            <person name="Wu D."/>
            <person name="Yu G."/>
            <person name="Fraser C.M."/>
            <person name="Venter J.C."/>
            <person name="Davis R.W."/>
        </authorList>
    </citation>
    <scope>NUCLEOTIDE SEQUENCE [LARGE SCALE GENOMIC DNA]</scope>
    <source>
        <strain>cv. Columbia</strain>
    </source>
</reference>
<reference key="2">
    <citation type="journal article" date="2017" name="Plant J.">
        <title>Araport11: a complete reannotation of the Arabidopsis thaliana reference genome.</title>
        <authorList>
            <person name="Cheng C.Y."/>
            <person name="Krishnakumar V."/>
            <person name="Chan A.P."/>
            <person name="Thibaud-Nissen F."/>
            <person name="Schobel S."/>
            <person name="Town C.D."/>
        </authorList>
    </citation>
    <scope>GENOME REANNOTATION</scope>
    <source>
        <strain>cv. Columbia</strain>
    </source>
</reference>
<reference key="3">
    <citation type="journal article" date="2003" name="Science">
        <title>Empirical analysis of transcriptional activity in the Arabidopsis genome.</title>
        <authorList>
            <person name="Yamada K."/>
            <person name="Lim J."/>
            <person name="Dale J.M."/>
            <person name="Chen H."/>
            <person name="Shinn P."/>
            <person name="Palm C.J."/>
            <person name="Southwick A.M."/>
            <person name="Wu H.C."/>
            <person name="Kim C.J."/>
            <person name="Nguyen M."/>
            <person name="Pham P.K."/>
            <person name="Cheuk R.F."/>
            <person name="Karlin-Newmann G."/>
            <person name="Liu S.X."/>
            <person name="Lam B."/>
            <person name="Sakano H."/>
            <person name="Wu T."/>
            <person name="Yu G."/>
            <person name="Miranda M."/>
            <person name="Quach H.L."/>
            <person name="Tripp M."/>
            <person name="Chang C.H."/>
            <person name="Lee J.M."/>
            <person name="Toriumi M.J."/>
            <person name="Chan M.M."/>
            <person name="Tang C.C."/>
            <person name="Onodera C.S."/>
            <person name="Deng J.M."/>
            <person name="Akiyama K."/>
            <person name="Ansari Y."/>
            <person name="Arakawa T."/>
            <person name="Banh J."/>
            <person name="Banno F."/>
            <person name="Bowser L."/>
            <person name="Brooks S.Y."/>
            <person name="Carninci P."/>
            <person name="Chao Q."/>
            <person name="Choy N."/>
            <person name="Enju A."/>
            <person name="Goldsmith A.D."/>
            <person name="Gurjal M."/>
            <person name="Hansen N.F."/>
            <person name="Hayashizaki Y."/>
            <person name="Johnson-Hopson C."/>
            <person name="Hsuan V.W."/>
            <person name="Iida K."/>
            <person name="Karnes M."/>
            <person name="Khan S."/>
            <person name="Koesema E."/>
            <person name="Ishida J."/>
            <person name="Jiang P.X."/>
            <person name="Jones T."/>
            <person name="Kawai J."/>
            <person name="Kamiya A."/>
            <person name="Meyers C."/>
            <person name="Nakajima M."/>
            <person name="Narusaka M."/>
            <person name="Seki M."/>
            <person name="Sakurai T."/>
            <person name="Satou M."/>
            <person name="Tamse R."/>
            <person name="Vaysberg M."/>
            <person name="Wallender E.K."/>
            <person name="Wong C."/>
            <person name="Yamamura Y."/>
            <person name="Yuan S."/>
            <person name="Shinozaki K."/>
            <person name="Davis R.W."/>
            <person name="Theologis A."/>
            <person name="Ecker J.R."/>
        </authorList>
    </citation>
    <scope>NUCLEOTIDE SEQUENCE [LARGE SCALE MRNA]</scope>
    <source>
        <strain>cv. Columbia</strain>
    </source>
</reference>
<reference key="4">
    <citation type="submission" date="2002-03" db="EMBL/GenBank/DDBJ databases">
        <title>Full-length cDNA from Arabidopsis thaliana.</title>
        <authorList>
            <person name="Brover V.V."/>
            <person name="Troukhan M.E."/>
            <person name="Alexandrov N.A."/>
            <person name="Lu Y.-P."/>
            <person name="Flavell R.B."/>
            <person name="Feldmann K.A."/>
        </authorList>
    </citation>
    <scope>NUCLEOTIDE SEQUENCE [LARGE SCALE MRNA]</scope>
</reference>
<reference key="5">
    <citation type="journal article" date="2012" name="Plant Cell">
        <title>The GCP3-interacting proteins GIP1 and GIP2 are required for gamma-tubulin complex protein localization, spindle integrity, and chromosomal stability.</title>
        <authorList>
            <person name="Janski N."/>
            <person name="Masoud K."/>
            <person name="Batzenschlager M."/>
            <person name="Herzog E."/>
            <person name="Evrard J.L."/>
            <person name="Houlne G."/>
            <person name="Bourge M."/>
            <person name="Chaboute M.E."/>
            <person name="Schmit A.C."/>
        </authorList>
    </citation>
    <scope>SUBUNIT</scope>
    <scope>INTERACTION WITH GCP3</scope>
    <scope>TISSUE SPECIFICITY</scope>
    <scope>SUBCELLULAR LOCATION</scope>
    <scope>DISRUPTION PHENOTYPE</scope>
</reference>
<reference key="6">
    <citation type="journal article" date="2012" name="Plant J.">
        <title>Arabidopsis GCP3-interacting protein 1/MOZART 1 is an integral component of the gamma-tubulin-containing microtubule nucleating complex.</title>
        <authorList>
            <person name="Nakamura M."/>
            <person name="Yagi N."/>
            <person name="Kato T."/>
            <person name="Fujita S."/>
            <person name="Kawashima N."/>
            <person name="Ehrhardt D.W."/>
            <person name="Hashimoto T."/>
        </authorList>
    </citation>
    <scope>DISRUPTION PHENOTYPE</scope>
    <scope>SUBUNIT</scope>
    <scope>INTERACTION WITH GCP3</scope>
    <scope>SUBCELLULAR LOCATION</scope>
    <scope>TISSUE SPECIFICITY</scope>
</reference>
<reference key="7">
    <citation type="journal article" date="2013" name="Front. Plant Sci.">
        <title>The GIP gamma-tubulin complex-associated proteins are involved in nuclear architecture in Arabidopsis thaliana.</title>
        <authorList>
            <person name="Batzenschlager M."/>
            <person name="Masoud K."/>
            <person name="Janski N."/>
            <person name="Houlne G."/>
            <person name="Herzog E."/>
            <person name="Evrard J.L."/>
            <person name="Baumberger N."/>
            <person name="Erhardt M."/>
            <person name="Nomine Y."/>
            <person name="Kieffer B."/>
            <person name="Schmit A.C."/>
            <person name="Chaboute M.E."/>
        </authorList>
    </citation>
    <scope>INTERACTION WITH GIP1</scope>
</reference>
<dbReference type="EMBL" id="AC012679">
    <property type="protein sequence ID" value="AAG52087.1"/>
    <property type="molecule type" value="Genomic_DNA"/>
</dbReference>
<dbReference type="EMBL" id="CP002684">
    <property type="protein sequence ID" value="AEE35509.1"/>
    <property type="molecule type" value="Genomic_DNA"/>
</dbReference>
<dbReference type="EMBL" id="BT002967">
    <property type="protein sequence ID" value="AAO22776.1"/>
    <property type="molecule type" value="mRNA"/>
</dbReference>
<dbReference type="EMBL" id="BT004410">
    <property type="protein sequence ID" value="AAO42404.1"/>
    <property type="molecule type" value="mRNA"/>
</dbReference>
<dbReference type="EMBL" id="AY086832">
    <property type="protein sequence ID" value="AAM63880.1"/>
    <property type="molecule type" value="mRNA"/>
</dbReference>
<dbReference type="PIR" id="C96765">
    <property type="entry name" value="C96765"/>
</dbReference>
<dbReference type="RefSeq" id="NP_565072.1">
    <property type="nucleotide sequence ID" value="NM_106038.2"/>
</dbReference>
<dbReference type="SMR" id="Q9C9T3"/>
<dbReference type="BioGRID" id="28933">
    <property type="interactions" value="7"/>
</dbReference>
<dbReference type="FunCoup" id="Q9C9T3">
    <property type="interactions" value="1523"/>
</dbReference>
<dbReference type="IntAct" id="Q9C9T3">
    <property type="interactions" value="5"/>
</dbReference>
<dbReference type="STRING" id="3702.Q9C9T3"/>
<dbReference type="PaxDb" id="3702-AT1G73790.1"/>
<dbReference type="DNASU" id="843714"/>
<dbReference type="EnsemblPlants" id="AT1G73790.1">
    <property type="protein sequence ID" value="AT1G73790.1"/>
    <property type="gene ID" value="AT1G73790"/>
</dbReference>
<dbReference type="GeneID" id="843714"/>
<dbReference type="Gramene" id="AT1G73790.1">
    <property type="protein sequence ID" value="AT1G73790.1"/>
    <property type="gene ID" value="AT1G73790"/>
</dbReference>
<dbReference type="KEGG" id="ath:AT1G73790"/>
<dbReference type="Araport" id="AT1G73790"/>
<dbReference type="TAIR" id="AT1G73790">
    <property type="gene designation" value="GIP2"/>
</dbReference>
<dbReference type="HOGENOM" id="CLU_160285_3_0_1"/>
<dbReference type="InParanoid" id="Q9C9T3"/>
<dbReference type="OMA" id="STNERYV"/>
<dbReference type="OrthoDB" id="48571at2759"/>
<dbReference type="PhylomeDB" id="Q9C9T3"/>
<dbReference type="CD-CODE" id="33FCD62D">
    <property type="entry name" value="Centrosome"/>
</dbReference>
<dbReference type="PRO" id="PR:Q9C9T3"/>
<dbReference type="Proteomes" id="UP000006548">
    <property type="component" value="Chromosome 1"/>
</dbReference>
<dbReference type="ExpressionAtlas" id="Q9C9T3">
    <property type="expression patterns" value="baseline and differential"/>
</dbReference>
<dbReference type="GO" id="GO:0000931">
    <property type="term" value="C:gamma-tubulin ring complex"/>
    <property type="evidence" value="ECO:0007669"/>
    <property type="project" value="InterPro"/>
</dbReference>
<dbReference type="GO" id="GO:0005874">
    <property type="term" value="C:microtubule"/>
    <property type="evidence" value="ECO:0007669"/>
    <property type="project" value="UniProtKB-KW"/>
</dbReference>
<dbReference type="GO" id="GO:0005635">
    <property type="term" value="C:nuclear envelope"/>
    <property type="evidence" value="ECO:0007669"/>
    <property type="project" value="UniProtKB-SubCell"/>
</dbReference>
<dbReference type="GO" id="GO:0009524">
    <property type="term" value="C:phragmoplast"/>
    <property type="evidence" value="ECO:0007669"/>
    <property type="project" value="UniProtKB-SubCell"/>
</dbReference>
<dbReference type="GO" id="GO:0005819">
    <property type="term" value="C:spindle"/>
    <property type="evidence" value="ECO:0007669"/>
    <property type="project" value="UniProtKB-SubCell"/>
</dbReference>
<dbReference type="GO" id="GO:0042393">
    <property type="term" value="F:histone binding"/>
    <property type="evidence" value="ECO:0000353"/>
    <property type="project" value="TAIR"/>
</dbReference>
<dbReference type="GO" id="GO:0034080">
    <property type="term" value="P:CENP-A containing chromatin assembly"/>
    <property type="evidence" value="ECO:0000316"/>
    <property type="project" value="TAIR"/>
</dbReference>
<dbReference type="GO" id="GO:0034508">
    <property type="term" value="P:centromere complex assembly"/>
    <property type="evidence" value="ECO:0000316"/>
    <property type="project" value="TAIR"/>
</dbReference>
<dbReference type="GO" id="GO:0033566">
    <property type="term" value="P:gamma-tubulin complex localization"/>
    <property type="evidence" value="ECO:0007669"/>
    <property type="project" value="InterPro"/>
</dbReference>
<dbReference type="GO" id="GO:0051418">
    <property type="term" value="P:microtubule nucleation by microtubule organizing center"/>
    <property type="evidence" value="ECO:0000314"/>
    <property type="project" value="TAIR"/>
</dbReference>
<dbReference type="InterPro" id="IPR022214">
    <property type="entry name" value="MZT1"/>
</dbReference>
<dbReference type="PANTHER" id="PTHR28520">
    <property type="entry name" value="MITOTIC-SPINDLE ORGANIZING PROTEIN 1"/>
    <property type="match status" value="1"/>
</dbReference>
<dbReference type="PANTHER" id="PTHR28520:SF2">
    <property type="entry name" value="MITOTIC-SPINDLE ORGANIZING PROTEIN 1"/>
    <property type="match status" value="1"/>
</dbReference>
<dbReference type="Pfam" id="PF12554">
    <property type="entry name" value="MOZART1"/>
    <property type="match status" value="1"/>
</dbReference>
<organism>
    <name type="scientific">Arabidopsis thaliana</name>
    <name type="common">Mouse-ear cress</name>
    <dbReference type="NCBI Taxonomy" id="3702"/>
    <lineage>
        <taxon>Eukaryota</taxon>
        <taxon>Viridiplantae</taxon>
        <taxon>Streptophyta</taxon>
        <taxon>Embryophyta</taxon>
        <taxon>Tracheophyta</taxon>
        <taxon>Spermatophyta</taxon>
        <taxon>Magnoliopsida</taxon>
        <taxon>eudicotyledons</taxon>
        <taxon>Gunneridae</taxon>
        <taxon>Pentapetalae</taxon>
        <taxon>rosids</taxon>
        <taxon>malvids</taxon>
        <taxon>Brassicales</taxon>
        <taxon>Brassicaceae</taxon>
        <taxon>Camelineae</taxon>
        <taxon>Arabidopsis</taxon>
    </lineage>
</organism>
<accession>Q9C9T3</accession>
<gene>
    <name type="primary">GIP2</name>
    <name type="synonym">GIP1A</name>
    <name type="ordered locus">At1g73790</name>
    <name type="ORF">F25P22.21</name>
</gene>
<feature type="chain" id="PRO_0000365719" description="Mitotic-spindle organizing protein 1A">
    <location>
        <begin position="1"/>
        <end position="67"/>
    </location>
</feature>